<feature type="signal peptide" evidence="1">
    <location>
        <begin position="1"/>
        <end position="21"/>
    </location>
</feature>
<feature type="chain" id="PRO_0000036238" description="Alpha-2-macroglobulin homolog" evidence="1">
    <location>
        <begin position="22"/>
        <end position="1906"/>
    </location>
</feature>
<feature type="lipid moiety-binding region" description="N-palmitoyl cysteine" evidence="1">
    <location>
        <position position="22"/>
    </location>
</feature>
<feature type="lipid moiety-binding region" description="S-diacylglycerol cysteine" evidence="1">
    <location>
        <position position="22"/>
    </location>
</feature>
<organism>
    <name type="scientific">Nostoc sp. (strain PCC 7120 / SAG 25.82 / UTEX 2576)</name>
    <dbReference type="NCBI Taxonomy" id="103690"/>
    <lineage>
        <taxon>Bacteria</taxon>
        <taxon>Bacillati</taxon>
        <taxon>Cyanobacteriota</taxon>
        <taxon>Cyanophyceae</taxon>
        <taxon>Nostocales</taxon>
        <taxon>Nostocaceae</taxon>
        <taxon>Nostoc</taxon>
    </lineage>
</organism>
<evidence type="ECO:0000255" key="1">
    <source>
        <dbReference type="PROSITE-ProRule" id="PRU00303"/>
    </source>
</evidence>
<evidence type="ECO:0000305" key="2"/>
<accession>Q8YM40</accession>
<dbReference type="EMBL" id="BA000019">
    <property type="protein sequence ID" value="BAB76799.1"/>
    <property type="molecule type" value="Genomic_DNA"/>
</dbReference>
<dbReference type="PIR" id="AD2443">
    <property type="entry name" value="AD2443"/>
</dbReference>
<dbReference type="SMR" id="Q8YM40"/>
<dbReference type="STRING" id="103690.gene:10497159"/>
<dbReference type="DNASU" id="1108704"/>
<dbReference type="KEGG" id="ana:all5100"/>
<dbReference type="eggNOG" id="COG2373">
    <property type="taxonomic scope" value="Bacteria"/>
</dbReference>
<dbReference type="Proteomes" id="UP000002483">
    <property type="component" value="Chromosome"/>
</dbReference>
<dbReference type="GO" id="GO:0005886">
    <property type="term" value="C:plasma membrane"/>
    <property type="evidence" value="ECO:0007669"/>
    <property type="project" value="UniProtKB-SubCell"/>
</dbReference>
<dbReference type="GO" id="GO:0004866">
    <property type="term" value="F:endopeptidase inhibitor activity"/>
    <property type="evidence" value="ECO:0007669"/>
    <property type="project" value="InterPro"/>
</dbReference>
<dbReference type="CDD" id="cd02891">
    <property type="entry name" value="A2M_like"/>
    <property type="match status" value="1"/>
</dbReference>
<dbReference type="Gene3D" id="1.50.10.20">
    <property type="match status" value="1"/>
</dbReference>
<dbReference type="Gene3D" id="2.60.40.1930">
    <property type="match status" value="1"/>
</dbReference>
<dbReference type="Gene3D" id="2.60.40.3710">
    <property type="match status" value="1"/>
</dbReference>
<dbReference type="InterPro" id="IPR011625">
    <property type="entry name" value="A2M_N_BRD"/>
</dbReference>
<dbReference type="InterPro" id="IPR041246">
    <property type="entry name" value="Bact_MG10"/>
</dbReference>
<dbReference type="InterPro" id="IPR001599">
    <property type="entry name" value="Macroglobln_a2"/>
</dbReference>
<dbReference type="InterPro" id="IPR002890">
    <property type="entry name" value="MG2"/>
</dbReference>
<dbReference type="InterPro" id="IPR032812">
    <property type="entry name" value="SbsA_Ig"/>
</dbReference>
<dbReference type="InterPro" id="IPR008930">
    <property type="entry name" value="Terpenoid_cyclase/PrenylTrfase"/>
</dbReference>
<dbReference type="InterPro" id="IPR051802">
    <property type="entry name" value="YfhM-like"/>
</dbReference>
<dbReference type="PANTHER" id="PTHR40094">
    <property type="entry name" value="ALPHA-2-MACROGLOBULIN HOMOLOG"/>
    <property type="match status" value="1"/>
</dbReference>
<dbReference type="PANTHER" id="PTHR40094:SF1">
    <property type="entry name" value="UBIQUITIN DOMAIN-CONTAINING PROTEIN"/>
    <property type="match status" value="1"/>
</dbReference>
<dbReference type="Pfam" id="PF00207">
    <property type="entry name" value="A2M"/>
    <property type="match status" value="1"/>
</dbReference>
<dbReference type="Pfam" id="PF07703">
    <property type="entry name" value="A2M_BRD"/>
    <property type="match status" value="1"/>
</dbReference>
<dbReference type="Pfam" id="PF13205">
    <property type="entry name" value="Big_5"/>
    <property type="match status" value="1"/>
</dbReference>
<dbReference type="Pfam" id="PF17973">
    <property type="entry name" value="bMG10"/>
    <property type="match status" value="1"/>
</dbReference>
<dbReference type="Pfam" id="PF01835">
    <property type="entry name" value="MG2"/>
    <property type="match status" value="1"/>
</dbReference>
<dbReference type="SMART" id="SM01360">
    <property type="entry name" value="A2M"/>
    <property type="match status" value="1"/>
</dbReference>
<dbReference type="SMART" id="SM01359">
    <property type="entry name" value="A2M_N_2"/>
    <property type="match status" value="1"/>
</dbReference>
<dbReference type="SUPFAM" id="SSF48239">
    <property type="entry name" value="Terpenoid cyclases/Protein prenyltransferases"/>
    <property type="match status" value="1"/>
</dbReference>
<dbReference type="PROSITE" id="PS51257">
    <property type="entry name" value="PROKAR_LIPOPROTEIN"/>
    <property type="match status" value="1"/>
</dbReference>
<name>A2MGH_NOSS1</name>
<reference key="1">
    <citation type="journal article" date="2001" name="DNA Res.">
        <title>Complete genomic sequence of the filamentous nitrogen-fixing cyanobacterium Anabaena sp. strain PCC 7120.</title>
        <authorList>
            <person name="Kaneko T."/>
            <person name="Nakamura Y."/>
            <person name="Wolk C.P."/>
            <person name="Kuritz T."/>
            <person name="Sasamoto S."/>
            <person name="Watanabe A."/>
            <person name="Iriguchi M."/>
            <person name="Ishikawa A."/>
            <person name="Kawashima K."/>
            <person name="Kimura T."/>
            <person name="Kishida Y."/>
            <person name="Kohara M."/>
            <person name="Matsumoto M."/>
            <person name="Matsuno A."/>
            <person name="Muraki A."/>
            <person name="Nakazaki N."/>
            <person name="Shimpo S."/>
            <person name="Sugimoto M."/>
            <person name="Takazawa M."/>
            <person name="Yamada M."/>
            <person name="Yasuda M."/>
            <person name="Tabata S."/>
        </authorList>
    </citation>
    <scope>NUCLEOTIDE SEQUENCE [LARGE SCALE GENOMIC DNA]</scope>
    <source>
        <strain>PCC 7120 / SAG 25.82 / UTEX 2576</strain>
    </source>
</reference>
<keyword id="KW-1003">Cell membrane</keyword>
<keyword id="KW-0449">Lipoprotein</keyword>
<keyword id="KW-0472">Membrane</keyword>
<keyword id="KW-0564">Palmitate</keyword>
<keyword id="KW-1185">Reference proteome</keyword>
<keyword id="KW-0732">Signal</keyword>
<sequence>MIIRVCIRCFIVLTLVLGIGGCNFFGINSGREPLPAVSPLTPPKLPDWIEQISPIGEAQPLNQIRIRFKEALIPVESLDSPEQQQLLQKFALWPPLPGQFRFLTPRMVGFQADKALPIATRLQVTLKAGLADLKNHRLDKDLSWTFNTQSINLTNLPGVNPIEKADAEPIDLQPKLQFTSNVELDLASVQEHLQLIPEGKNEGLRFQVTLNKEEKPLDKEEPLKKFDPSARNWIYNLRPQKNLKTATRYRLVFSPGIRPAYGNLVTDREFVSKLSTYSPLAFQKINFYGQPDAGGTYGRFIKGSPQLEFNNILVAESAKTNIKINPAPKDISRLLQVNDEDRIIGINPYALEPAKTYTITIGENLQDKFGQTLGKPVSLKYDTGDLAGDIWVPSDLNIFPAGKDLRLNISTVNLPESKYQAAYRVVKPTDLVYFNYGNDLLPKPAEWKSFQVSGKKNQSVDVTVPLREKINAKTGMLAYGVQARTNKYQENGKELWREPTTYGLVELTNLGVFSQWFPESGLIRVNHLTDGAPVKAAVIEIYQSKLQAKSRPEPVPCATGKTDENGTFRVNREALQQCTAGSQNSIKSPELLVIASEKEDWAFTRTEEYSGVYGYGIDAGWQGNKPESRGVIFSDRQLYQSGEKAWFTGFADYLQNGVIQQDKNADYQITLVNPDGQKTSLGTQTTNEFGTFSLEMPINKTQGLGYYTIQAKGKNGLEISGEFRVAEFKPPNFKVEVKLDKEFAYIGDDVDINATSNYLFGAPVEGGEAKYFITRQQANFIPKGWEEFTFGRQWFWPEEAPTISSDVLQSNSQLDGNDKSSQMVNVAKDLPYPMTYRVDVQVADVSNLSVANSQSFTALPSNRLIGLKSNFIADAGKAFPIEVIIADPTGKLITGQRVRLELQQIKYSSVTQLVEGSQTPKNQVEYKTVAQTEITSTSNPQSVNLTPPESGTYRIRVNFSDAKNELGATDSQIWVTGGNAVFWGTRDKDVLEVKLDKKEYKAGETATALIQSPYADAELYFAVIKDKPIYQQITKVQGSAPQIQFRVTPEMLPNAAVEAVLVRQGKPINQVEVGSLDNLVKIGFTPFKVNLEDKYLKLQVKPAQASLEPGAEETIQLEVKDNQGNPTKGQLTVMVVNEAVLQLSGYRPPNLVDTVYAEQPISTRFTDNRPDVILQPQDVAKPKGWGYGGGFSTGAANTRTRTDFQPLAYYNGSVLTDASGNAQITVKLPDDLTTWRVMAVATDGNLRFGNGDATFITTKPLLSNAILPQFVRPGDRILAGLSVTNNTGNTGNLSINGEISGAVKFNSKNPTTTTLQTQAESATQAYRFPMVADSVGVGKVRFTTQLNGTADAFELPLQVKPLEITEQIVETGVSQKQIKIPLNVDKNTFPEAGGLDIQLASTLIPEIKAPAKQVLTDNDLPFTEPSASQLIIATNLQTIAQKYGQTFAEFNSRQQANLAVEKLQKLQISDGGFAAFPGQEKSDPWVSAYSVESLVKASQVFPNLVDTGMLSRLKTYLQKVLANPGEYDFCKQQLCKRQLQLNALIALSELGDKRNTFLTDIYEQRNNFDLVTQIKLARYLSQFPEWQDESQQLVNKLQQNISETGRTAVVSLPPSWGWMSSPTTAQAQALRLFIAKQSKPEIIDKLLQSLLALRRDGTWQTDYNNAQALTALVEYGQLQPTPPNFVATVQLAGRKLGENRFTGYKNPSLQLSVPMNQLPRGRHDLTLQKSGNGTLHYLVAYNYRLQGNQPGRFNGLRITREISQVNAKRILRKTGIYALDQPLTLALGQVFDIGLEIIVDRPVDHLVIKDPLPAGLEAVDASFQTTTAALQAKADSWELGFRNIYSDRIIAYADHLEPGVYSLHYLVRSVTPGTFSWPGAEVHLQYAPEEFGRTAEMKLIVEEKGR</sequence>
<protein>
    <recommendedName>
        <fullName evidence="2">Alpha-2-macroglobulin homolog</fullName>
    </recommendedName>
</protein>
<comment type="subcellular location">
    <subcellularLocation>
        <location evidence="1">Cell membrane</location>
        <topology evidence="1">Lipid-anchor</topology>
    </subcellularLocation>
</comment>
<comment type="similarity">
    <text evidence="2">Belongs to the protease inhibitor I39 (alpha-2-macroglobulin) family. Bacterial alpha-2-macroglobulin subfamily.</text>
</comment>
<comment type="caution">
    <text evidence="2">Lacks the conserved thioester bond that is characteristic of the alpha-2-macroglobulins.</text>
</comment>
<gene>
    <name type="ordered locus">all5100</name>
</gene>
<proteinExistence type="inferred from homology"/>